<dbReference type="EC" id="3.4.11.-" evidence="1"/>
<dbReference type="EMBL" id="LT708304">
    <property type="protein sequence ID" value="SIT99971.1"/>
    <property type="molecule type" value="Genomic_DNA"/>
</dbReference>
<dbReference type="RefSeq" id="NP_855022.1">
    <property type="nucleotide sequence ID" value="NC_002945.3"/>
</dbReference>
<dbReference type="RefSeq" id="WP_003406908.1">
    <property type="nucleotide sequence ID" value="NC_002945.4"/>
</dbReference>
<dbReference type="SMR" id="P64812"/>
<dbReference type="KEGG" id="mbo:BQ2027_MB1368"/>
<dbReference type="PATRIC" id="fig|233413.5.peg.1500"/>
<dbReference type="Proteomes" id="UP000001419">
    <property type="component" value="Chromosome"/>
</dbReference>
<dbReference type="GO" id="GO:0005886">
    <property type="term" value="C:plasma membrane"/>
    <property type="evidence" value="ECO:0007669"/>
    <property type="project" value="UniProtKB-SubCell"/>
</dbReference>
<dbReference type="GO" id="GO:0004177">
    <property type="term" value="F:aminopeptidase activity"/>
    <property type="evidence" value="ECO:0007669"/>
    <property type="project" value="UniProtKB-KW"/>
</dbReference>
<dbReference type="GO" id="GO:0006508">
    <property type="term" value="P:proteolysis"/>
    <property type="evidence" value="ECO:0007669"/>
    <property type="project" value="UniProtKB-KW"/>
</dbReference>
<dbReference type="CDD" id="cd02252">
    <property type="entry name" value="nylC_like"/>
    <property type="match status" value="1"/>
</dbReference>
<dbReference type="FunFam" id="3.60.70.12:FF:000003">
    <property type="entry name" value="Putative cysteine transferase"/>
    <property type="match status" value="1"/>
</dbReference>
<dbReference type="Gene3D" id="3.60.70.12">
    <property type="entry name" value="L-amino peptidase D-ALA esterase/amidase"/>
    <property type="match status" value="1"/>
</dbReference>
<dbReference type="InterPro" id="IPR016117">
    <property type="entry name" value="ArgJ-like_dom_sf"/>
</dbReference>
<dbReference type="InterPro" id="IPR005321">
    <property type="entry name" value="Peptidase_S58_DmpA"/>
</dbReference>
<dbReference type="PANTHER" id="PTHR36512:SF3">
    <property type="entry name" value="BLR5678 PROTEIN"/>
    <property type="match status" value="1"/>
</dbReference>
<dbReference type="PANTHER" id="PTHR36512">
    <property type="entry name" value="D-AMINOPEPTIDASE"/>
    <property type="match status" value="1"/>
</dbReference>
<dbReference type="Pfam" id="PF03576">
    <property type="entry name" value="Peptidase_S58"/>
    <property type="match status" value="1"/>
</dbReference>
<dbReference type="SUPFAM" id="SSF56266">
    <property type="entry name" value="DmpA/ArgJ-like"/>
    <property type="match status" value="1"/>
</dbReference>
<sequence length="344" mass="33953">MNSITDVGGIRVGHYQRLDPDASLGAGWACGVTVVLPPPGTVGAVDCRGGAPGTRETDLLDPANSVRFVDALLLAGGSAYGLAAADGVMRWLEEHRRGVAMDSGVVPIVPGAVIFDLPVGGWNCRPTADFGYSACAAAGVDVAVGTVGVGVGARAGALKGGVGTASATLQSGVTVGVLAVVNAAGNVVDPATGLPWMADLVGEFALRAPPAEQIAALAQLSSPLGAFNTPFNTTIGVIACDAALSPAACRRIAIAAHDGLARTIRPAHTPLDGDTVFALATGAVAVPPEAGVPAALSPETQLVTAVGAAAADCLARAVLAGVLNAQPVAGIPTYRDMFPGAFGS</sequence>
<organism>
    <name type="scientific">Mycobacterium bovis (strain ATCC BAA-935 / AF2122/97)</name>
    <dbReference type="NCBI Taxonomy" id="233413"/>
    <lineage>
        <taxon>Bacteria</taxon>
        <taxon>Bacillati</taxon>
        <taxon>Actinomycetota</taxon>
        <taxon>Actinomycetes</taxon>
        <taxon>Mycobacteriales</taxon>
        <taxon>Mycobacteriaceae</taxon>
        <taxon>Mycobacterium</taxon>
        <taxon>Mycobacterium tuberculosis complex</taxon>
    </lineage>
</organism>
<accession>P64812</accession>
<accession>A0A1R3XY16</accession>
<accession>Q10644</accession>
<accession>X2BI21</accession>
<reference key="1">
    <citation type="journal article" date="2003" name="Proc. Natl. Acad. Sci. U.S.A.">
        <title>The complete genome sequence of Mycobacterium bovis.</title>
        <authorList>
            <person name="Garnier T."/>
            <person name="Eiglmeier K."/>
            <person name="Camus J.-C."/>
            <person name="Medina N."/>
            <person name="Mansoor H."/>
            <person name="Pryor M."/>
            <person name="Duthoy S."/>
            <person name="Grondin S."/>
            <person name="Lacroix C."/>
            <person name="Monsempe C."/>
            <person name="Simon S."/>
            <person name="Harris B."/>
            <person name="Atkin R."/>
            <person name="Doggett J."/>
            <person name="Mayes R."/>
            <person name="Keating L."/>
            <person name="Wheeler P.R."/>
            <person name="Parkhill J."/>
            <person name="Barrell B.G."/>
            <person name="Cole S.T."/>
            <person name="Gordon S.V."/>
            <person name="Hewinson R.G."/>
        </authorList>
    </citation>
    <scope>NUCLEOTIDE SEQUENCE [LARGE SCALE GENOMIC DNA]</scope>
    <source>
        <strain>ATCC BAA-935 / AF2122/97</strain>
    </source>
</reference>
<reference key="2">
    <citation type="journal article" date="2017" name="Genome Announc.">
        <title>Updated reference genome sequence and annotation of Mycobacterium bovis AF2122/97.</title>
        <authorList>
            <person name="Malone K.M."/>
            <person name="Farrell D."/>
            <person name="Stuber T.P."/>
            <person name="Schubert O.T."/>
            <person name="Aebersold R."/>
            <person name="Robbe-Austerman S."/>
            <person name="Gordon S.V."/>
        </authorList>
    </citation>
    <scope>NUCLEOTIDE SEQUENCE [LARGE SCALE GENOMIC DNA]</scope>
    <scope>GENOME REANNOTATION</scope>
    <source>
        <strain>ATCC BAA-935 / AF2122/97</strain>
    </source>
</reference>
<name>Y1368_MYCBO</name>
<protein>
    <recommendedName>
        <fullName>Uncharacterized aminopeptidase Mb1368</fullName>
        <ecNumber evidence="1">3.4.11.-</ecNumber>
    </recommendedName>
</protein>
<gene>
    <name type="ordered locus">BQ2027_MB1368</name>
</gene>
<comment type="function">
    <text evidence="1">Aminopeptidase.</text>
</comment>
<comment type="subcellular location">
    <subcellularLocation>
        <location evidence="3">Cell membrane</location>
        <topology evidence="3">Multi-pass membrane protein</topology>
    </subcellularLocation>
</comment>
<comment type="similarity">
    <text evidence="3">Belongs to the peptidase S58 family.</text>
</comment>
<evidence type="ECO:0000250" key="1">
    <source>
        <dbReference type="UniProtKB" id="Q52VH2"/>
    </source>
</evidence>
<evidence type="ECO:0000255" key="2"/>
<evidence type="ECO:0000305" key="3"/>
<proteinExistence type="inferred from homology"/>
<feature type="chain" id="PRO_0000103809" description="Uncharacterized aminopeptidase Mb1368">
    <location>
        <begin position="1"/>
        <end position="344"/>
    </location>
</feature>
<feature type="transmembrane region" description="Helical" evidence="2">
    <location>
        <begin position="25"/>
        <end position="45"/>
    </location>
</feature>
<feature type="transmembrane region" description="Helical" evidence="2">
    <location>
        <begin position="68"/>
        <end position="88"/>
    </location>
</feature>
<feature type="transmembrane region" description="Helical" evidence="2">
    <location>
        <begin position="104"/>
        <end position="124"/>
    </location>
</feature>
<feature type="transmembrane region" description="Helical" evidence="2">
    <location>
        <begin position="133"/>
        <end position="153"/>
    </location>
</feature>
<feature type="transmembrane region" description="Helical" evidence="2">
    <location>
        <begin position="161"/>
        <end position="181"/>
    </location>
</feature>
<feature type="transmembrane region" description="Helical" evidence="2">
    <location>
        <begin position="224"/>
        <end position="244"/>
    </location>
</feature>
<feature type="transmembrane region" description="Helical" evidence="2">
    <location>
        <begin position="276"/>
        <end position="296"/>
    </location>
</feature>
<feature type="transmembrane region" description="Helical" evidence="2">
    <location>
        <begin position="302"/>
        <end position="322"/>
    </location>
</feature>
<keyword id="KW-0031">Aminopeptidase</keyword>
<keyword id="KW-1003">Cell membrane</keyword>
<keyword id="KW-0378">Hydrolase</keyword>
<keyword id="KW-0472">Membrane</keyword>
<keyword id="KW-0645">Protease</keyword>
<keyword id="KW-1185">Reference proteome</keyword>
<keyword id="KW-0812">Transmembrane</keyword>
<keyword id="KW-1133">Transmembrane helix</keyword>